<name>CAPE_STAAU</name>
<sequence>MKLKYKVILIINFVTVLFSIFTFIGYLNNLIGFRVVTISLCITIAMTVYLLYKKRKGFLLVYLIYLFLTNFGVFVTNIFLANPLVEYHGDLSWYYINTSNLFSIATFAILTFTILSNFISVFSKINPSRKFDIKSKGNNLFYYTGILFIIGFTIQFLFYIITGRLAINTYGDYVSSIQELPMYTYGIFFFSIGIAFAFSNVKKTHIKYLVIILTPQVLFFLITGNRGEVFYPILSALGVLIVRNYKIKWWMIITIVFTLFFVIPFIKVFRNMDSSSIEKVDINWFSSLVEIGYTLRPLGYVTRWIDGGESIVYGKSYLAPIQNIFSYIIPGLQPVNYEMVGYGFRYRLPGMGFNVIAEAYYNGAIVGVLIVMVLLVLLLWKFTNFKSFEMLSMGTAIVSVLINNIRNAFSFVPAYILIIIVIVIILLFIDSYLKKETKAD</sequence>
<feature type="chain" id="PRO_0000089312" description="Protein CapE">
    <location>
        <begin position="1"/>
        <end position="440"/>
    </location>
</feature>
<feature type="transmembrane region" description="Helical" evidence="1">
    <location>
        <begin position="7"/>
        <end position="27"/>
    </location>
</feature>
<feature type="transmembrane region" description="Helical" evidence="1">
    <location>
        <begin position="31"/>
        <end position="51"/>
    </location>
</feature>
<feature type="transmembrane region" description="Helical" evidence="1">
    <location>
        <begin position="60"/>
        <end position="80"/>
    </location>
</feature>
<feature type="transmembrane region" description="Helical" evidence="1">
    <location>
        <begin position="102"/>
        <end position="122"/>
    </location>
</feature>
<feature type="transmembrane region" description="Helical" evidence="1">
    <location>
        <begin position="141"/>
        <end position="161"/>
    </location>
</feature>
<feature type="transmembrane region" description="Helical" evidence="1">
    <location>
        <begin position="179"/>
        <end position="199"/>
    </location>
</feature>
<feature type="transmembrane region" description="Helical" evidence="1">
    <location>
        <begin position="204"/>
        <end position="224"/>
    </location>
</feature>
<feature type="transmembrane region" description="Helical" evidence="1">
    <location>
        <begin position="249"/>
        <end position="269"/>
    </location>
</feature>
<feature type="transmembrane region" description="Helical" evidence="1">
    <location>
        <begin position="324"/>
        <end position="344"/>
    </location>
</feature>
<feature type="transmembrane region" description="Helical" evidence="1">
    <location>
        <begin position="360"/>
        <end position="380"/>
    </location>
</feature>
<feature type="transmembrane region" description="Helical" evidence="1">
    <location>
        <begin position="382"/>
        <end position="402"/>
    </location>
</feature>
<feature type="transmembrane region" description="Helical" evidence="1">
    <location>
        <begin position="409"/>
        <end position="429"/>
    </location>
</feature>
<proteinExistence type="predicted"/>
<reference key="1">
    <citation type="journal article" date="1994" name="J. Bacteriol.">
        <title>Sequence analysis and molecular characterization of genes required for the biosynthesis of type 1 capsular polysaccharide in Staphylococcus aureus.</title>
        <authorList>
            <person name="Lin W.S."/>
            <person name="Cunneen T."/>
            <person name="Lee C.Y."/>
        </authorList>
    </citation>
    <scope>NUCLEOTIDE SEQUENCE [GENOMIC DNA]</scope>
    <source>
        <strain>ATCC 49951 / M / NCTC 10649</strain>
    </source>
</reference>
<accession>P39854</accession>
<dbReference type="EMBL" id="U10927">
    <property type="protein sequence ID" value="AAA64644.1"/>
    <property type="molecule type" value="Genomic_DNA"/>
</dbReference>
<dbReference type="RefSeq" id="WP_115294902.1">
    <property type="nucleotide sequence ID" value="NZ_UGZL01000001.1"/>
</dbReference>
<dbReference type="SMR" id="P39854"/>
<dbReference type="UniPathway" id="UPA00934"/>
<dbReference type="GO" id="GO:0005886">
    <property type="term" value="C:plasma membrane"/>
    <property type="evidence" value="ECO:0007669"/>
    <property type="project" value="UniProtKB-SubCell"/>
</dbReference>
<dbReference type="GO" id="GO:0045227">
    <property type="term" value="P:capsule polysaccharide biosynthetic process"/>
    <property type="evidence" value="ECO:0007669"/>
    <property type="project" value="UniProtKB-UniPathway"/>
</dbReference>
<dbReference type="InterPro" id="IPR029468">
    <property type="entry name" value="O-ag_pol_Wzy"/>
</dbReference>
<dbReference type="Pfam" id="PF14296">
    <property type="entry name" value="O-ag_pol_Wzy"/>
    <property type="match status" value="1"/>
</dbReference>
<organism>
    <name type="scientific">Staphylococcus aureus</name>
    <dbReference type="NCBI Taxonomy" id="1280"/>
    <lineage>
        <taxon>Bacteria</taxon>
        <taxon>Bacillati</taxon>
        <taxon>Bacillota</taxon>
        <taxon>Bacilli</taxon>
        <taxon>Bacillales</taxon>
        <taxon>Staphylococcaceae</taxon>
        <taxon>Staphylococcus</taxon>
    </lineage>
</organism>
<keyword id="KW-0972">Capsule biogenesis/degradation</keyword>
<keyword id="KW-1003">Cell membrane</keyword>
<keyword id="KW-0270">Exopolysaccharide synthesis</keyword>
<keyword id="KW-0472">Membrane</keyword>
<keyword id="KW-0812">Transmembrane</keyword>
<keyword id="KW-1133">Transmembrane helix</keyword>
<comment type="function">
    <text>Required for the biosynthesis of type 1 capsular polysaccharide.</text>
</comment>
<comment type="pathway">
    <text>Capsule biogenesis; capsule polysaccharide biosynthesis.</text>
</comment>
<comment type="subcellular location">
    <subcellularLocation>
        <location evidence="2">Cell membrane</location>
        <topology evidence="2">Multi-pass membrane protein</topology>
    </subcellularLocation>
</comment>
<gene>
    <name type="primary">capE</name>
</gene>
<protein>
    <recommendedName>
        <fullName>Protein CapE</fullName>
    </recommendedName>
</protein>
<evidence type="ECO:0000255" key="1"/>
<evidence type="ECO:0000305" key="2"/>